<gene>
    <name evidence="1" type="primary">rlmN</name>
    <name type="ordered locus">H16_A2367</name>
</gene>
<feature type="chain" id="PRO_0000350353" description="Dual-specificity RNA methyltransferase RlmN">
    <location>
        <begin position="1"/>
        <end position="384"/>
    </location>
</feature>
<feature type="domain" description="Radical SAM core" evidence="2">
    <location>
        <begin position="99"/>
        <end position="339"/>
    </location>
</feature>
<feature type="active site" description="Proton acceptor" evidence="1">
    <location>
        <position position="93"/>
    </location>
</feature>
<feature type="active site" description="S-methylcysteine intermediate" evidence="1">
    <location>
        <position position="344"/>
    </location>
</feature>
<feature type="binding site" evidence="1">
    <location>
        <position position="113"/>
    </location>
    <ligand>
        <name>[4Fe-4S] cluster</name>
        <dbReference type="ChEBI" id="CHEBI:49883"/>
        <note>4Fe-4S-S-AdoMet</note>
    </ligand>
</feature>
<feature type="binding site" evidence="1">
    <location>
        <position position="117"/>
    </location>
    <ligand>
        <name>[4Fe-4S] cluster</name>
        <dbReference type="ChEBI" id="CHEBI:49883"/>
        <note>4Fe-4S-S-AdoMet</note>
    </ligand>
</feature>
<feature type="binding site" evidence="1">
    <location>
        <position position="120"/>
    </location>
    <ligand>
        <name>[4Fe-4S] cluster</name>
        <dbReference type="ChEBI" id="CHEBI:49883"/>
        <note>4Fe-4S-S-AdoMet</note>
    </ligand>
</feature>
<feature type="binding site" evidence="1">
    <location>
        <begin position="170"/>
        <end position="171"/>
    </location>
    <ligand>
        <name>S-adenosyl-L-methionine</name>
        <dbReference type="ChEBI" id="CHEBI:59789"/>
    </ligand>
</feature>
<feature type="binding site" evidence="1">
    <location>
        <position position="202"/>
    </location>
    <ligand>
        <name>S-adenosyl-L-methionine</name>
        <dbReference type="ChEBI" id="CHEBI:59789"/>
    </ligand>
</feature>
<feature type="binding site" evidence="1">
    <location>
        <begin position="224"/>
        <end position="226"/>
    </location>
    <ligand>
        <name>S-adenosyl-L-methionine</name>
        <dbReference type="ChEBI" id="CHEBI:59789"/>
    </ligand>
</feature>
<feature type="binding site" evidence="1">
    <location>
        <position position="301"/>
    </location>
    <ligand>
        <name>S-adenosyl-L-methionine</name>
        <dbReference type="ChEBI" id="CHEBI:59789"/>
    </ligand>
</feature>
<feature type="disulfide bond" description="(transient)" evidence="1">
    <location>
        <begin position="106"/>
        <end position="344"/>
    </location>
</feature>
<dbReference type="EC" id="2.1.1.192" evidence="1"/>
<dbReference type="EMBL" id="AM260479">
    <property type="protein sequence ID" value="CAJ93462.1"/>
    <property type="molecule type" value="Genomic_DNA"/>
</dbReference>
<dbReference type="RefSeq" id="WP_011615626.1">
    <property type="nucleotide sequence ID" value="NC_008313.1"/>
</dbReference>
<dbReference type="SMR" id="Q0K959"/>
<dbReference type="STRING" id="381666.H16_A2367"/>
<dbReference type="KEGG" id="reh:H16_A2367"/>
<dbReference type="PATRIC" id="fig|381666.6.peg.2775"/>
<dbReference type="eggNOG" id="COG0820">
    <property type="taxonomic scope" value="Bacteria"/>
</dbReference>
<dbReference type="HOGENOM" id="CLU_029101_0_0_4"/>
<dbReference type="OrthoDB" id="9793973at2"/>
<dbReference type="Proteomes" id="UP000008210">
    <property type="component" value="Chromosome 1"/>
</dbReference>
<dbReference type="GO" id="GO:0005737">
    <property type="term" value="C:cytoplasm"/>
    <property type="evidence" value="ECO:0007669"/>
    <property type="project" value="UniProtKB-SubCell"/>
</dbReference>
<dbReference type="GO" id="GO:0051539">
    <property type="term" value="F:4 iron, 4 sulfur cluster binding"/>
    <property type="evidence" value="ECO:0007669"/>
    <property type="project" value="UniProtKB-UniRule"/>
</dbReference>
<dbReference type="GO" id="GO:0046872">
    <property type="term" value="F:metal ion binding"/>
    <property type="evidence" value="ECO:0007669"/>
    <property type="project" value="UniProtKB-KW"/>
</dbReference>
<dbReference type="GO" id="GO:0070040">
    <property type="term" value="F:rRNA (adenine(2503)-C2-)-methyltransferase activity"/>
    <property type="evidence" value="ECO:0007669"/>
    <property type="project" value="UniProtKB-UniRule"/>
</dbReference>
<dbReference type="GO" id="GO:0019843">
    <property type="term" value="F:rRNA binding"/>
    <property type="evidence" value="ECO:0007669"/>
    <property type="project" value="UniProtKB-UniRule"/>
</dbReference>
<dbReference type="GO" id="GO:0002935">
    <property type="term" value="F:tRNA (adenine(37)-C2)-methyltransferase activity"/>
    <property type="evidence" value="ECO:0007669"/>
    <property type="project" value="UniProtKB-UniRule"/>
</dbReference>
<dbReference type="GO" id="GO:0000049">
    <property type="term" value="F:tRNA binding"/>
    <property type="evidence" value="ECO:0007669"/>
    <property type="project" value="UniProtKB-UniRule"/>
</dbReference>
<dbReference type="GO" id="GO:0070475">
    <property type="term" value="P:rRNA base methylation"/>
    <property type="evidence" value="ECO:0007669"/>
    <property type="project" value="UniProtKB-UniRule"/>
</dbReference>
<dbReference type="GO" id="GO:0030488">
    <property type="term" value="P:tRNA methylation"/>
    <property type="evidence" value="ECO:0007669"/>
    <property type="project" value="UniProtKB-UniRule"/>
</dbReference>
<dbReference type="CDD" id="cd01335">
    <property type="entry name" value="Radical_SAM"/>
    <property type="match status" value="1"/>
</dbReference>
<dbReference type="FunFam" id="1.10.150.530:FF:000003">
    <property type="entry name" value="Dual-specificity RNA methyltransferase RlmN"/>
    <property type="match status" value="1"/>
</dbReference>
<dbReference type="FunFam" id="3.20.20.70:FF:000008">
    <property type="entry name" value="Dual-specificity RNA methyltransferase RlmN"/>
    <property type="match status" value="1"/>
</dbReference>
<dbReference type="Gene3D" id="1.10.150.530">
    <property type="match status" value="1"/>
</dbReference>
<dbReference type="Gene3D" id="3.20.20.70">
    <property type="entry name" value="Aldolase class I"/>
    <property type="match status" value="1"/>
</dbReference>
<dbReference type="HAMAP" id="MF_01849">
    <property type="entry name" value="RNA_methyltr_RlmN"/>
    <property type="match status" value="1"/>
</dbReference>
<dbReference type="InterPro" id="IPR013785">
    <property type="entry name" value="Aldolase_TIM"/>
</dbReference>
<dbReference type="InterPro" id="IPR040072">
    <property type="entry name" value="Methyltransferase_A"/>
</dbReference>
<dbReference type="InterPro" id="IPR048641">
    <property type="entry name" value="RlmN_N"/>
</dbReference>
<dbReference type="InterPro" id="IPR027492">
    <property type="entry name" value="RNA_MTrfase_RlmN"/>
</dbReference>
<dbReference type="InterPro" id="IPR004383">
    <property type="entry name" value="rRNA_lsu_MTrfase_RlmN/Cfr"/>
</dbReference>
<dbReference type="InterPro" id="IPR007197">
    <property type="entry name" value="rSAM"/>
</dbReference>
<dbReference type="NCBIfam" id="TIGR00048">
    <property type="entry name" value="rRNA_mod_RlmN"/>
    <property type="match status" value="1"/>
</dbReference>
<dbReference type="PANTHER" id="PTHR30544">
    <property type="entry name" value="23S RRNA METHYLTRANSFERASE"/>
    <property type="match status" value="1"/>
</dbReference>
<dbReference type="PANTHER" id="PTHR30544:SF5">
    <property type="entry name" value="RADICAL SAM CORE DOMAIN-CONTAINING PROTEIN"/>
    <property type="match status" value="1"/>
</dbReference>
<dbReference type="Pfam" id="PF04055">
    <property type="entry name" value="Radical_SAM"/>
    <property type="match status" value="1"/>
</dbReference>
<dbReference type="Pfam" id="PF21016">
    <property type="entry name" value="RlmN_N"/>
    <property type="match status" value="1"/>
</dbReference>
<dbReference type="PIRSF" id="PIRSF006004">
    <property type="entry name" value="CHP00048"/>
    <property type="match status" value="1"/>
</dbReference>
<dbReference type="SFLD" id="SFLDF00275">
    <property type="entry name" value="adenosine_C2_methyltransferase"/>
    <property type="match status" value="1"/>
</dbReference>
<dbReference type="SFLD" id="SFLDG01062">
    <property type="entry name" value="methyltransferase_(Class_A)"/>
    <property type="match status" value="1"/>
</dbReference>
<dbReference type="SUPFAM" id="SSF102114">
    <property type="entry name" value="Radical SAM enzymes"/>
    <property type="match status" value="1"/>
</dbReference>
<dbReference type="PROSITE" id="PS51918">
    <property type="entry name" value="RADICAL_SAM"/>
    <property type="match status" value="1"/>
</dbReference>
<protein>
    <recommendedName>
        <fullName evidence="1">Dual-specificity RNA methyltransferase RlmN</fullName>
        <ecNumber evidence="1">2.1.1.192</ecNumber>
    </recommendedName>
    <alternativeName>
        <fullName evidence="1">23S rRNA (adenine(2503)-C(2))-methyltransferase</fullName>
    </alternativeName>
    <alternativeName>
        <fullName evidence="1">23S rRNA m2A2503 methyltransferase</fullName>
    </alternativeName>
    <alternativeName>
        <fullName evidence="1">Ribosomal RNA large subunit methyltransferase N</fullName>
    </alternativeName>
    <alternativeName>
        <fullName evidence="1">tRNA (adenine(37)-C(2))-methyltransferase</fullName>
    </alternativeName>
    <alternativeName>
        <fullName evidence="1">tRNA m2A37 methyltransferase</fullName>
    </alternativeName>
</protein>
<comment type="function">
    <text evidence="1">Specifically methylates position 2 of adenine 2503 in 23S rRNA and position 2 of adenine 37 in tRNAs. m2A2503 modification seems to play a crucial role in the proofreading step occurring at the peptidyl transferase center and thus would serve to optimize ribosomal fidelity.</text>
</comment>
<comment type="catalytic activity">
    <reaction evidence="1">
        <text>adenosine(2503) in 23S rRNA + 2 reduced [2Fe-2S]-[ferredoxin] + 2 S-adenosyl-L-methionine = 2-methyladenosine(2503) in 23S rRNA + 5'-deoxyadenosine + L-methionine + 2 oxidized [2Fe-2S]-[ferredoxin] + S-adenosyl-L-homocysteine</text>
        <dbReference type="Rhea" id="RHEA:42916"/>
        <dbReference type="Rhea" id="RHEA-COMP:10000"/>
        <dbReference type="Rhea" id="RHEA-COMP:10001"/>
        <dbReference type="Rhea" id="RHEA-COMP:10152"/>
        <dbReference type="Rhea" id="RHEA-COMP:10282"/>
        <dbReference type="ChEBI" id="CHEBI:17319"/>
        <dbReference type="ChEBI" id="CHEBI:33737"/>
        <dbReference type="ChEBI" id="CHEBI:33738"/>
        <dbReference type="ChEBI" id="CHEBI:57844"/>
        <dbReference type="ChEBI" id="CHEBI:57856"/>
        <dbReference type="ChEBI" id="CHEBI:59789"/>
        <dbReference type="ChEBI" id="CHEBI:74411"/>
        <dbReference type="ChEBI" id="CHEBI:74497"/>
        <dbReference type="EC" id="2.1.1.192"/>
    </reaction>
</comment>
<comment type="catalytic activity">
    <reaction evidence="1">
        <text>adenosine(37) in tRNA + 2 reduced [2Fe-2S]-[ferredoxin] + 2 S-adenosyl-L-methionine = 2-methyladenosine(37) in tRNA + 5'-deoxyadenosine + L-methionine + 2 oxidized [2Fe-2S]-[ferredoxin] + S-adenosyl-L-homocysteine</text>
        <dbReference type="Rhea" id="RHEA:43332"/>
        <dbReference type="Rhea" id="RHEA-COMP:10000"/>
        <dbReference type="Rhea" id="RHEA-COMP:10001"/>
        <dbReference type="Rhea" id="RHEA-COMP:10162"/>
        <dbReference type="Rhea" id="RHEA-COMP:10485"/>
        <dbReference type="ChEBI" id="CHEBI:17319"/>
        <dbReference type="ChEBI" id="CHEBI:33737"/>
        <dbReference type="ChEBI" id="CHEBI:33738"/>
        <dbReference type="ChEBI" id="CHEBI:57844"/>
        <dbReference type="ChEBI" id="CHEBI:57856"/>
        <dbReference type="ChEBI" id="CHEBI:59789"/>
        <dbReference type="ChEBI" id="CHEBI:74411"/>
        <dbReference type="ChEBI" id="CHEBI:74497"/>
        <dbReference type="EC" id="2.1.1.192"/>
    </reaction>
</comment>
<comment type="cofactor">
    <cofactor evidence="1">
        <name>[4Fe-4S] cluster</name>
        <dbReference type="ChEBI" id="CHEBI:49883"/>
    </cofactor>
    <text evidence="1">Binds 1 [4Fe-4S] cluster. The cluster is coordinated with 3 cysteines and an exchangeable S-adenosyl-L-methionine.</text>
</comment>
<comment type="subcellular location">
    <subcellularLocation>
        <location evidence="1">Cytoplasm</location>
    </subcellularLocation>
</comment>
<comment type="miscellaneous">
    <text evidence="1">Reaction proceeds by a ping-pong mechanism involving intermediate methylation of a conserved cysteine residue.</text>
</comment>
<comment type="similarity">
    <text evidence="1">Belongs to the radical SAM superfamily. RlmN family.</text>
</comment>
<evidence type="ECO:0000255" key="1">
    <source>
        <dbReference type="HAMAP-Rule" id="MF_01849"/>
    </source>
</evidence>
<evidence type="ECO:0000255" key="2">
    <source>
        <dbReference type="PROSITE-ProRule" id="PRU01266"/>
    </source>
</evidence>
<sequence>MNALVNLLDLDADALTAYCGELGEKPFRARQLQRWIHHYGASRFDAMSDLAKSLREKLATRAEIRAPAAITDHLSADGTRKWLLDVGQGNAVETVYIPEETRGTLCVSSQAGCAVNCRFCSTGKQGFSRNLSTGEIIGQLWMAEFAMREQLGRGPKDDRVISNVVMMGMGEPLLNYDAVVPAMRLMLDDNAYGLSRRRVTLSTSGVVPMMDRLSKDLPVALAVSLHASNDALRDVLVPLNKKYPLAELMAACRRYLEFAPRDFITFEYCMLDGVNDGVEHARELLKLVADVPCKFNLIPFNPFPESGLKRSNNDQIRRFAQVLMDAGIVTTIRKTRGDDIDAACGQLAGEVKDRTRLVERGKFGKITPLVPVAASGQPREVRPA</sequence>
<accession>Q0K959</accession>
<keyword id="KW-0004">4Fe-4S</keyword>
<keyword id="KW-0963">Cytoplasm</keyword>
<keyword id="KW-1015">Disulfide bond</keyword>
<keyword id="KW-0408">Iron</keyword>
<keyword id="KW-0411">Iron-sulfur</keyword>
<keyword id="KW-0479">Metal-binding</keyword>
<keyword id="KW-0489">Methyltransferase</keyword>
<keyword id="KW-1185">Reference proteome</keyword>
<keyword id="KW-0698">rRNA processing</keyword>
<keyword id="KW-0949">S-adenosyl-L-methionine</keyword>
<keyword id="KW-0808">Transferase</keyword>
<keyword id="KW-0819">tRNA processing</keyword>
<organism>
    <name type="scientific">Cupriavidus necator (strain ATCC 17699 / DSM 428 / KCTC 22496 / NCIMB 10442 / H16 / Stanier 337)</name>
    <name type="common">Ralstonia eutropha</name>
    <dbReference type="NCBI Taxonomy" id="381666"/>
    <lineage>
        <taxon>Bacteria</taxon>
        <taxon>Pseudomonadati</taxon>
        <taxon>Pseudomonadota</taxon>
        <taxon>Betaproteobacteria</taxon>
        <taxon>Burkholderiales</taxon>
        <taxon>Burkholderiaceae</taxon>
        <taxon>Cupriavidus</taxon>
    </lineage>
</organism>
<proteinExistence type="inferred from homology"/>
<name>RLMN_CUPNH</name>
<reference key="1">
    <citation type="journal article" date="2006" name="Nat. Biotechnol.">
        <title>Genome sequence of the bioplastic-producing 'Knallgas' bacterium Ralstonia eutropha H16.</title>
        <authorList>
            <person name="Pohlmann A."/>
            <person name="Fricke W.F."/>
            <person name="Reinecke F."/>
            <person name="Kusian B."/>
            <person name="Liesegang H."/>
            <person name="Cramm R."/>
            <person name="Eitinger T."/>
            <person name="Ewering C."/>
            <person name="Poetter M."/>
            <person name="Schwartz E."/>
            <person name="Strittmatter A."/>
            <person name="Voss I."/>
            <person name="Gottschalk G."/>
            <person name="Steinbuechel A."/>
            <person name="Friedrich B."/>
            <person name="Bowien B."/>
        </authorList>
    </citation>
    <scope>NUCLEOTIDE SEQUENCE [LARGE SCALE GENOMIC DNA]</scope>
    <source>
        <strain>ATCC 17699 / DSM 428 / KCTC 22496 / NCIMB 10442 / H16 / Stanier 337</strain>
    </source>
</reference>